<dbReference type="EC" id="7.2.2.7" evidence="1"/>
<dbReference type="EMBL" id="CP000094">
    <property type="protein sequence ID" value="ABA74580.1"/>
    <property type="molecule type" value="Genomic_DNA"/>
</dbReference>
<dbReference type="RefSeq" id="WP_011334251.1">
    <property type="nucleotide sequence ID" value="NC_007492.2"/>
</dbReference>
<dbReference type="SMR" id="Q3KCC5"/>
<dbReference type="KEGG" id="pfo:Pfl01_2839"/>
<dbReference type="eggNOG" id="COG3842">
    <property type="taxonomic scope" value="Bacteria"/>
</dbReference>
<dbReference type="HOGENOM" id="CLU_000604_1_1_6"/>
<dbReference type="Proteomes" id="UP000002704">
    <property type="component" value="Chromosome"/>
</dbReference>
<dbReference type="GO" id="GO:0043190">
    <property type="term" value="C:ATP-binding cassette (ABC) transporter complex"/>
    <property type="evidence" value="ECO:0007669"/>
    <property type="project" value="InterPro"/>
</dbReference>
<dbReference type="GO" id="GO:0015408">
    <property type="term" value="F:ABC-type ferric iron transporter activity"/>
    <property type="evidence" value="ECO:0007669"/>
    <property type="project" value="UniProtKB-EC"/>
</dbReference>
<dbReference type="GO" id="GO:0005524">
    <property type="term" value="F:ATP binding"/>
    <property type="evidence" value="ECO:0007669"/>
    <property type="project" value="UniProtKB-KW"/>
</dbReference>
<dbReference type="GO" id="GO:0016887">
    <property type="term" value="F:ATP hydrolysis activity"/>
    <property type="evidence" value="ECO:0007669"/>
    <property type="project" value="InterPro"/>
</dbReference>
<dbReference type="CDD" id="cd03259">
    <property type="entry name" value="ABC_Carb_Solutes_like"/>
    <property type="match status" value="1"/>
</dbReference>
<dbReference type="FunFam" id="3.40.50.300:FF:000425">
    <property type="entry name" value="Probable ABC transporter, ATP-binding subunit"/>
    <property type="match status" value="1"/>
</dbReference>
<dbReference type="Gene3D" id="2.40.50.450">
    <property type="match status" value="1"/>
</dbReference>
<dbReference type="Gene3D" id="3.40.50.300">
    <property type="entry name" value="P-loop containing nucleotide triphosphate hydrolases"/>
    <property type="match status" value="1"/>
</dbReference>
<dbReference type="InterPro" id="IPR003593">
    <property type="entry name" value="AAA+_ATPase"/>
</dbReference>
<dbReference type="InterPro" id="IPR050093">
    <property type="entry name" value="ABC_SmlMolc_Importer"/>
</dbReference>
<dbReference type="InterPro" id="IPR003439">
    <property type="entry name" value="ABC_transporter-like_ATP-bd"/>
</dbReference>
<dbReference type="InterPro" id="IPR017871">
    <property type="entry name" value="ABC_transporter-like_CS"/>
</dbReference>
<dbReference type="InterPro" id="IPR015853">
    <property type="entry name" value="ABC_transpr_FbpC"/>
</dbReference>
<dbReference type="InterPro" id="IPR008995">
    <property type="entry name" value="Mo/tungstate-bd_C_term_dom"/>
</dbReference>
<dbReference type="InterPro" id="IPR027417">
    <property type="entry name" value="P-loop_NTPase"/>
</dbReference>
<dbReference type="InterPro" id="IPR013611">
    <property type="entry name" value="Transp-assoc_OB_typ2"/>
</dbReference>
<dbReference type="PANTHER" id="PTHR42781:SF5">
    <property type="entry name" value="PUTRESCINE TRANSPORT ATP-BINDING PROTEIN POTG"/>
    <property type="match status" value="1"/>
</dbReference>
<dbReference type="PANTHER" id="PTHR42781">
    <property type="entry name" value="SPERMIDINE/PUTRESCINE IMPORT ATP-BINDING PROTEIN POTA"/>
    <property type="match status" value="1"/>
</dbReference>
<dbReference type="Pfam" id="PF00005">
    <property type="entry name" value="ABC_tran"/>
    <property type="match status" value="1"/>
</dbReference>
<dbReference type="Pfam" id="PF08402">
    <property type="entry name" value="TOBE_2"/>
    <property type="match status" value="1"/>
</dbReference>
<dbReference type="SMART" id="SM00382">
    <property type="entry name" value="AAA"/>
    <property type="match status" value="1"/>
</dbReference>
<dbReference type="SUPFAM" id="SSF50331">
    <property type="entry name" value="MOP-like"/>
    <property type="match status" value="1"/>
</dbReference>
<dbReference type="SUPFAM" id="SSF52540">
    <property type="entry name" value="P-loop containing nucleoside triphosphate hydrolases"/>
    <property type="match status" value="1"/>
</dbReference>
<dbReference type="PROSITE" id="PS00211">
    <property type="entry name" value="ABC_TRANSPORTER_1"/>
    <property type="match status" value="1"/>
</dbReference>
<dbReference type="PROSITE" id="PS50893">
    <property type="entry name" value="ABC_TRANSPORTER_2"/>
    <property type="match status" value="1"/>
</dbReference>
<dbReference type="PROSITE" id="PS51242">
    <property type="entry name" value="FBPC"/>
    <property type="match status" value="1"/>
</dbReference>
<accession>Q3KCC5</accession>
<feature type="chain" id="PRO_0000272043" description="Fe(3+) ions import ATP-binding protein FbpC">
    <location>
        <begin position="1"/>
        <end position="350"/>
    </location>
</feature>
<feature type="domain" description="ABC transporter" evidence="1">
    <location>
        <begin position="4"/>
        <end position="236"/>
    </location>
</feature>
<feature type="binding site" evidence="1">
    <location>
        <begin position="36"/>
        <end position="43"/>
    </location>
    <ligand>
        <name>ATP</name>
        <dbReference type="ChEBI" id="CHEBI:30616"/>
    </ligand>
</feature>
<protein>
    <recommendedName>
        <fullName evidence="1">Fe(3+) ions import ATP-binding protein FbpC</fullName>
        <ecNumber evidence="1">7.2.2.7</ecNumber>
    </recommendedName>
</protein>
<name>FBPC_PSEPF</name>
<proteinExistence type="inferred from homology"/>
<sequence length="350" mass="37300">MNALDIINLSKSFGAQTALDSINLSVPTGSRTVIVGPSGSGKTTLLRMIAGFEFPDAGSLMLNGQTLVDRTHAVPAYQRQIGYVPQDGALFPHMTVADNIGFGLAETGSARAERIQALMDNVALNADMATRWPHELSGGQQQRVSLARALAQRPRLMLLDEPFSALDTGLRGAMRKMVARLLEEAGVTTILVTHDQGEALSFADQLAVMRDGRLVQSGHPMDLYRYPNDEQTAHFLGDAVVMPARIEAGWAHCDLGRVMVNSNGFAGAAQIMLRPEQLQLSDIPADPDGCHAVVTDRDFGGNVCTLTVELRTQASPGRSLLVRSSGMHAPPAGSAVQLSILGAAHVFATP</sequence>
<gene>
    <name evidence="1" type="primary">fbpC</name>
    <name type="ordered locus">Pfl01_2839</name>
</gene>
<evidence type="ECO:0000255" key="1">
    <source>
        <dbReference type="HAMAP-Rule" id="MF_01706"/>
    </source>
</evidence>
<organism>
    <name type="scientific">Pseudomonas fluorescens (strain Pf0-1)</name>
    <dbReference type="NCBI Taxonomy" id="205922"/>
    <lineage>
        <taxon>Bacteria</taxon>
        <taxon>Pseudomonadati</taxon>
        <taxon>Pseudomonadota</taxon>
        <taxon>Gammaproteobacteria</taxon>
        <taxon>Pseudomonadales</taxon>
        <taxon>Pseudomonadaceae</taxon>
        <taxon>Pseudomonas</taxon>
    </lineage>
</organism>
<comment type="function">
    <text evidence="1">Part of the ABC transporter complex FbpABC involved in Fe(3+) ions import. Responsible for energy coupling to the transport system.</text>
</comment>
<comment type="catalytic activity">
    <reaction evidence="1">
        <text>Fe(3+)(out) + ATP + H2O = Fe(3+)(in) + ADP + phosphate + H(+)</text>
        <dbReference type="Rhea" id="RHEA:12332"/>
        <dbReference type="ChEBI" id="CHEBI:15377"/>
        <dbReference type="ChEBI" id="CHEBI:15378"/>
        <dbReference type="ChEBI" id="CHEBI:29034"/>
        <dbReference type="ChEBI" id="CHEBI:30616"/>
        <dbReference type="ChEBI" id="CHEBI:43474"/>
        <dbReference type="ChEBI" id="CHEBI:456216"/>
        <dbReference type="EC" id="7.2.2.7"/>
    </reaction>
</comment>
<comment type="subunit">
    <text evidence="1">The complex is composed of two ATP-binding proteins (FbpC), two transmembrane proteins (FbpB) and a solute-binding protein (FbpA).</text>
</comment>
<comment type="subcellular location">
    <subcellularLocation>
        <location evidence="1">Cell inner membrane</location>
        <topology evidence="1">Peripheral membrane protein</topology>
    </subcellularLocation>
</comment>
<comment type="similarity">
    <text evidence="1">Belongs to the ABC transporter superfamily. Fe(3+) ion importer (TC 3.A.1.10) family.</text>
</comment>
<reference key="1">
    <citation type="journal article" date="2009" name="Genome Biol.">
        <title>Genomic and genetic analyses of diversity and plant interactions of Pseudomonas fluorescens.</title>
        <authorList>
            <person name="Silby M.W."/>
            <person name="Cerdeno-Tarraga A.M."/>
            <person name="Vernikos G.S."/>
            <person name="Giddens S.R."/>
            <person name="Jackson R.W."/>
            <person name="Preston G.M."/>
            <person name="Zhang X.-X."/>
            <person name="Moon C.D."/>
            <person name="Gehrig S.M."/>
            <person name="Godfrey S.A.C."/>
            <person name="Knight C.G."/>
            <person name="Malone J.G."/>
            <person name="Robinson Z."/>
            <person name="Spiers A.J."/>
            <person name="Harris S."/>
            <person name="Challis G.L."/>
            <person name="Yaxley A.M."/>
            <person name="Harris D."/>
            <person name="Seeger K."/>
            <person name="Murphy L."/>
            <person name="Rutter S."/>
            <person name="Squares R."/>
            <person name="Quail M.A."/>
            <person name="Saunders E."/>
            <person name="Mavromatis K."/>
            <person name="Brettin T.S."/>
            <person name="Bentley S.D."/>
            <person name="Hothersall J."/>
            <person name="Stephens E."/>
            <person name="Thomas C.M."/>
            <person name="Parkhill J."/>
            <person name="Levy S.B."/>
            <person name="Rainey P.B."/>
            <person name="Thomson N.R."/>
        </authorList>
    </citation>
    <scope>NUCLEOTIDE SEQUENCE [LARGE SCALE GENOMIC DNA]</scope>
    <source>
        <strain>Pf0-1</strain>
    </source>
</reference>
<keyword id="KW-0067">ATP-binding</keyword>
<keyword id="KW-0997">Cell inner membrane</keyword>
<keyword id="KW-1003">Cell membrane</keyword>
<keyword id="KW-0406">Ion transport</keyword>
<keyword id="KW-0408">Iron</keyword>
<keyword id="KW-0410">Iron transport</keyword>
<keyword id="KW-0472">Membrane</keyword>
<keyword id="KW-0547">Nucleotide-binding</keyword>
<keyword id="KW-1278">Translocase</keyword>
<keyword id="KW-0813">Transport</keyword>